<gene>
    <name evidence="1" type="primary">rplT</name>
    <name type="ordered locus">ZMO1515</name>
</gene>
<evidence type="ECO:0000255" key="1">
    <source>
        <dbReference type="HAMAP-Rule" id="MF_00382"/>
    </source>
</evidence>
<evidence type="ECO:0000305" key="2"/>
<dbReference type="EMBL" id="AE008692">
    <property type="protein sequence ID" value="AAV90139.1"/>
    <property type="molecule type" value="Genomic_DNA"/>
</dbReference>
<dbReference type="RefSeq" id="WP_011241288.1">
    <property type="nucleotide sequence ID" value="NZ_CP035711.1"/>
</dbReference>
<dbReference type="SMR" id="Q5NMC1"/>
<dbReference type="STRING" id="264203.ZMO1515"/>
<dbReference type="GeneID" id="79905139"/>
<dbReference type="KEGG" id="zmo:ZMO1515"/>
<dbReference type="eggNOG" id="COG0292">
    <property type="taxonomic scope" value="Bacteria"/>
</dbReference>
<dbReference type="HOGENOM" id="CLU_123265_0_1_5"/>
<dbReference type="Proteomes" id="UP000001173">
    <property type="component" value="Chromosome"/>
</dbReference>
<dbReference type="GO" id="GO:1990904">
    <property type="term" value="C:ribonucleoprotein complex"/>
    <property type="evidence" value="ECO:0007669"/>
    <property type="project" value="UniProtKB-KW"/>
</dbReference>
<dbReference type="GO" id="GO:0005840">
    <property type="term" value="C:ribosome"/>
    <property type="evidence" value="ECO:0007669"/>
    <property type="project" value="UniProtKB-KW"/>
</dbReference>
<dbReference type="GO" id="GO:0019843">
    <property type="term" value="F:rRNA binding"/>
    <property type="evidence" value="ECO:0007669"/>
    <property type="project" value="UniProtKB-UniRule"/>
</dbReference>
<dbReference type="GO" id="GO:0003735">
    <property type="term" value="F:structural constituent of ribosome"/>
    <property type="evidence" value="ECO:0007669"/>
    <property type="project" value="InterPro"/>
</dbReference>
<dbReference type="GO" id="GO:0000027">
    <property type="term" value="P:ribosomal large subunit assembly"/>
    <property type="evidence" value="ECO:0007669"/>
    <property type="project" value="UniProtKB-UniRule"/>
</dbReference>
<dbReference type="GO" id="GO:0006412">
    <property type="term" value="P:translation"/>
    <property type="evidence" value="ECO:0007669"/>
    <property type="project" value="InterPro"/>
</dbReference>
<dbReference type="CDD" id="cd07026">
    <property type="entry name" value="Ribosomal_L20"/>
    <property type="match status" value="1"/>
</dbReference>
<dbReference type="FunFam" id="1.10.1900.20:FF:000001">
    <property type="entry name" value="50S ribosomal protein L20"/>
    <property type="match status" value="1"/>
</dbReference>
<dbReference type="Gene3D" id="6.10.160.10">
    <property type="match status" value="1"/>
</dbReference>
<dbReference type="Gene3D" id="1.10.1900.20">
    <property type="entry name" value="Ribosomal protein L20"/>
    <property type="match status" value="1"/>
</dbReference>
<dbReference type="HAMAP" id="MF_00382">
    <property type="entry name" value="Ribosomal_bL20"/>
    <property type="match status" value="1"/>
</dbReference>
<dbReference type="InterPro" id="IPR005813">
    <property type="entry name" value="Ribosomal_bL20"/>
</dbReference>
<dbReference type="InterPro" id="IPR049946">
    <property type="entry name" value="RIBOSOMAL_L20_CS"/>
</dbReference>
<dbReference type="InterPro" id="IPR035566">
    <property type="entry name" value="Ribosomal_protein_bL20_C"/>
</dbReference>
<dbReference type="NCBIfam" id="TIGR01032">
    <property type="entry name" value="rplT_bact"/>
    <property type="match status" value="1"/>
</dbReference>
<dbReference type="PANTHER" id="PTHR10986">
    <property type="entry name" value="39S RIBOSOMAL PROTEIN L20"/>
    <property type="match status" value="1"/>
</dbReference>
<dbReference type="Pfam" id="PF00453">
    <property type="entry name" value="Ribosomal_L20"/>
    <property type="match status" value="1"/>
</dbReference>
<dbReference type="PRINTS" id="PR00062">
    <property type="entry name" value="RIBOSOMALL20"/>
</dbReference>
<dbReference type="SUPFAM" id="SSF74731">
    <property type="entry name" value="Ribosomal protein L20"/>
    <property type="match status" value="1"/>
</dbReference>
<dbReference type="PROSITE" id="PS00937">
    <property type="entry name" value="RIBOSOMAL_L20"/>
    <property type="match status" value="1"/>
</dbReference>
<organism>
    <name type="scientific">Zymomonas mobilis subsp. mobilis (strain ATCC 31821 / ZM4 / CP4)</name>
    <dbReference type="NCBI Taxonomy" id="264203"/>
    <lineage>
        <taxon>Bacteria</taxon>
        <taxon>Pseudomonadati</taxon>
        <taxon>Pseudomonadota</taxon>
        <taxon>Alphaproteobacteria</taxon>
        <taxon>Sphingomonadales</taxon>
        <taxon>Zymomonadaceae</taxon>
        <taxon>Zymomonas</taxon>
    </lineage>
</organism>
<name>RL20_ZYMMO</name>
<comment type="function">
    <text evidence="1">Binds directly to 23S ribosomal RNA and is necessary for the in vitro assembly process of the 50S ribosomal subunit. It is not involved in the protein synthesizing functions of that subunit.</text>
</comment>
<comment type="similarity">
    <text evidence="1">Belongs to the bacterial ribosomal protein bL20 family.</text>
</comment>
<protein>
    <recommendedName>
        <fullName evidence="1">Large ribosomal subunit protein bL20</fullName>
    </recommendedName>
    <alternativeName>
        <fullName evidence="2">50S ribosomal protein L20</fullName>
    </alternativeName>
</protein>
<feature type="chain" id="PRO_0000243762" description="Large ribosomal subunit protein bL20">
    <location>
        <begin position="1"/>
        <end position="125"/>
    </location>
</feature>
<sequence length="125" mass="13968">MARVKRGTTTRAKHNRILDQAKGYYGRRKNTIRIARQAVEKAGQYAYRDRKVKKRSFRALWIQRINAAVRAEGLTYGVFMYGLKLAGLDLDRKVLADLAMNESAAFGAIIAQVKSALPEGARVAA</sequence>
<keyword id="KW-1185">Reference proteome</keyword>
<keyword id="KW-0687">Ribonucleoprotein</keyword>
<keyword id="KW-0689">Ribosomal protein</keyword>
<keyword id="KW-0694">RNA-binding</keyword>
<keyword id="KW-0699">rRNA-binding</keyword>
<accession>Q5NMC1</accession>
<reference key="1">
    <citation type="journal article" date="2005" name="Nat. Biotechnol.">
        <title>The genome sequence of the ethanologenic bacterium Zymomonas mobilis ZM4.</title>
        <authorList>
            <person name="Seo J.-S."/>
            <person name="Chong H."/>
            <person name="Park H.S."/>
            <person name="Yoon K.-O."/>
            <person name="Jung C."/>
            <person name="Kim J.J."/>
            <person name="Hong J.H."/>
            <person name="Kim H."/>
            <person name="Kim J.-H."/>
            <person name="Kil J.-I."/>
            <person name="Park C.J."/>
            <person name="Oh H.-M."/>
            <person name="Lee J.-S."/>
            <person name="Jin S.-J."/>
            <person name="Um H.-W."/>
            <person name="Lee H.-J."/>
            <person name="Oh S.-J."/>
            <person name="Kim J.Y."/>
            <person name="Kang H.L."/>
            <person name="Lee S.Y."/>
            <person name="Lee K.J."/>
            <person name="Kang H.S."/>
        </authorList>
    </citation>
    <scope>NUCLEOTIDE SEQUENCE [LARGE SCALE GENOMIC DNA]</scope>
    <source>
        <strain>ATCC 31821 / ZM4 / CP4</strain>
    </source>
</reference>
<proteinExistence type="inferred from homology"/>